<reference key="1">
    <citation type="journal article" date="1997" name="Virology">
        <title>The sequence of the Orgyia pseudotsugata multinucleocapsid nuclear polyhedrosis virus genome.</title>
        <authorList>
            <person name="Ahrens C.H."/>
            <person name="Russell R.R."/>
            <person name="Funk C.J."/>
            <person name="Evans J."/>
            <person name="Harwood S."/>
            <person name="Rohrmann G.F."/>
        </authorList>
    </citation>
    <scope>NUCLEOTIDE SEQUENCE [LARGE SCALE GENOMIC DNA]</scope>
</reference>
<organismHost>
    <name type="scientific">Orgyia pseudotsugata</name>
    <name type="common">Douglas-fir tussock moth</name>
    <dbReference type="NCBI Taxonomy" id="33414"/>
</organismHost>
<dbReference type="EMBL" id="U75930">
    <property type="protein sequence ID" value="AAC59043.1"/>
    <property type="molecule type" value="Genomic_DNA"/>
</dbReference>
<dbReference type="RefSeq" id="NP_046200.1">
    <property type="nucleotide sequence ID" value="NC_001875.2"/>
</dbReference>
<dbReference type="KEGG" id="vg:912099"/>
<dbReference type="OrthoDB" id="12745at10239"/>
<dbReference type="Proteomes" id="UP000009248">
    <property type="component" value="Genome"/>
</dbReference>
<dbReference type="InterPro" id="IPR009672">
    <property type="entry name" value="Pkip-1"/>
</dbReference>
<dbReference type="Pfam" id="PF06878">
    <property type="entry name" value="Pkip-1"/>
    <property type="match status" value="1"/>
</dbReference>
<proteinExistence type="predicted"/>
<sequence length="166" mass="18390">METDLAAIVHKKRALLNAAFKQQDKKIAKYFAKPCENDAEKMLMLAAEIHGQVEQLEALLSVARASDADKREFARDCSDLDIDAQDLQRMCASNEPTYFAAKYDAATVLAAHPAAYDGFLGHSERFVDAMRSLNAPNADADYLAQRKCAAIRHLCALEYLVGLHTK</sequence>
<name>Y024_NPVOP</name>
<feature type="chain" id="PRO_0000132961" description="Uncharacterized 18.4 kDa protein">
    <location>
        <begin position="1"/>
        <end position="166"/>
    </location>
</feature>
<keyword id="KW-1185">Reference proteome</keyword>
<gene>
    <name type="ORF">ORF44</name>
</gene>
<accession>O10299</accession>
<protein>
    <recommendedName>
        <fullName>Uncharacterized 18.4 kDa protein</fullName>
    </recommendedName>
</protein>
<organism>
    <name type="scientific">Orgyia pseudotsugata multicapsid polyhedrosis virus</name>
    <name type="common">OpMNPV</name>
    <dbReference type="NCBI Taxonomy" id="262177"/>
    <lineage>
        <taxon>Viruses</taxon>
        <taxon>Viruses incertae sedis</taxon>
        <taxon>Naldaviricetes</taxon>
        <taxon>Lefavirales</taxon>
        <taxon>Baculoviridae</taxon>
        <taxon>Alphabaculovirus</taxon>
        <taxon>Alphabaculovirus orpseudotsugatae</taxon>
    </lineage>
</organism>